<protein>
    <recommendedName>
        <fullName evidence="1">Lipoprotein-releasing system ATP-binding protein LolD</fullName>
        <ecNumber evidence="1">7.6.2.-</ecNumber>
    </recommendedName>
</protein>
<keyword id="KW-0067">ATP-binding</keyword>
<keyword id="KW-0997">Cell inner membrane</keyword>
<keyword id="KW-1003">Cell membrane</keyword>
<keyword id="KW-0472">Membrane</keyword>
<keyword id="KW-0547">Nucleotide-binding</keyword>
<keyword id="KW-1185">Reference proteome</keyword>
<keyword id="KW-1278">Translocase</keyword>
<keyword id="KW-0813">Transport</keyword>
<reference key="1">
    <citation type="journal article" date="2004" name="Nature">
        <title>Genome sequence of Silicibacter pomeroyi reveals adaptations to the marine environment.</title>
        <authorList>
            <person name="Moran M.A."/>
            <person name="Buchan A."/>
            <person name="Gonzalez J.M."/>
            <person name="Heidelberg J.F."/>
            <person name="Whitman W.B."/>
            <person name="Kiene R.P."/>
            <person name="Henriksen J.R."/>
            <person name="King G.M."/>
            <person name="Belas R."/>
            <person name="Fuqua C."/>
            <person name="Brinkac L.M."/>
            <person name="Lewis M."/>
            <person name="Johri S."/>
            <person name="Weaver B."/>
            <person name="Pai G."/>
            <person name="Eisen J.A."/>
            <person name="Rahe E."/>
            <person name="Sheldon W.M."/>
            <person name="Ye W."/>
            <person name="Miller T.R."/>
            <person name="Carlton J."/>
            <person name="Rasko D.A."/>
            <person name="Paulsen I.T."/>
            <person name="Ren Q."/>
            <person name="Daugherty S.C."/>
            <person name="DeBoy R.T."/>
            <person name="Dodson R.J."/>
            <person name="Durkin A.S."/>
            <person name="Madupu R."/>
            <person name="Nelson W.C."/>
            <person name="Sullivan S.A."/>
            <person name="Rosovitz M.J."/>
            <person name="Haft D.H."/>
            <person name="Selengut J."/>
            <person name="Ward N."/>
        </authorList>
    </citation>
    <scope>NUCLEOTIDE SEQUENCE [LARGE SCALE GENOMIC DNA]</scope>
    <source>
        <strain>ATCC 700808 / DSM 15171 / DSS-3</strain>
    </source>
</reference>
<reference key="2">
    <citation type="journal article" date="2014" name="Stand. Genomic Sci.">
        <title>An updated genome annotation for the model marine bacterium Ruegeria pomeroyi DSS-3.</title>
        <authorList>
            <person name="Rivers A.R."/>
            <person name="Smith C.B."/>
            <person name="Moran M.A."/>
        </authorList>
    </citation>
    <scope>GENOME REANNOTATION</scope>
    <source>
        <strain>ATCC 700808 / DSM 15171 / DSS-3</strain>
    </source>
</reference>
<dbReference type="EC" id="7.6.2.-" evidence="1"/>
<dbReference type="EMBL" id="CP000031">
    <property type="protein sequence ID" value="AAV94424.1"/>
    <property type="molecule type" value="Genomic_DNA"/>
</dbReference>
<dbReference type="RefSeq" id="WP_011046871.1">
    <property type="nucleotide sequence ID" value="NC_003911.12"/>
</dbReference>
<dbReference type="SMR" id="Q5LUD0"/>
<dbReference type="STRING" id="246200.SPO1124"/>
<dbReference type="PaxDb" id="246200-SPO1124"/>
<dbReference type="KEGG" id="sil:SPO1124"/>
<dbReference type="eggNOG" id="COG1136">
    <property type="taxonomic scope" value="Bacteria"/>
</dbReference>
<dbReference type="HOGENOM" id="CLU_000604_1_22_5"/>
<dbReference type="OrthoDB" id="9786950at2"/>
<dbReference type="Proteomes" id="UP000001023">
    <property type="component" value="Chromosome"/>
</dbReference>
<dbReference type="GO" id="GO:0005886">
    <property type="term" value="C:plasma membrane"/>
    <property type="evidence" value="ECO:0007669"/>
    <property type="project" value="UniProtKB-SubCell"/>
</dbReference>
<dbReference type="GO" id="GO:0005524">
    <property type="term" value="F:ATP binding"/>
    <property type="evidence" value="ECO:0007669"/>
    <property type="project" value="UniProtKB-KW"/>
</dbReference>
<dbReference type="GO" id="GO:0016887">
    <property type="term" value="F:ATP hydrolysis activity"/>
    <property type="evidence" value="ECO:0007669"/>
    <property type="project" value="InterPro"/>
</dbReference>
<dbReference type="GO" id="GO:0022857">
    <property type="term" value="F:transmembrane transporter activity"/>
    <property type="evidence" value="ECO:0007669"/>
    <property type="project" value="TreeGrafter"/>
</dbReference>
<dbReference type="GO" id="GO:0044874">
    <property type="term" value="P:lipoprotein localization to outer membrane"/>
    <property type="evidence" value="ECO:0007669"/>
    <property type="project" value="TreeGrafter"/>
</dbReference>
<dbReference type="GO" id="GO:0089705">
    <property type="term" value="P:protein localization to outer membrane"/>
    <property type="evidence" value="ECO:0007669"/>
    <property type="project" value="TreeGrafter"/>
</dbReference>
<dbReference type="CDD" id="cd03255">
    <property type="entry name" value="ABC_MJ0796_LolCDE_FtsE"/>
    <property type="match status" value="1"/>
</dbReference>
<dbReference type="Gene3D" id="3.40.50.300">
    <property type="entry name" value="P-loop containing nucleotide triphosphate hydrolases"/>
    <property type="match status" value="1"/>
</dbReference>
<dbReference type="InterPro" id="IPR003593">
    <property type="entry name" value="AAA+_ATPase"/>
</dbReference>
<dbReference type="InterPro" id="IPR003439">
    <property type="entry name" value="ABC_transporter-like_ATP-bd"/>
</dbReference>
<dbReference type="InterPro" id="IPR017871">
    <property type="entry name" value="ABC_transporter-like_CS"/>
</dbReference>
<dbReference type="InterPro" id="IPR015854">
    <property type="entry name" value="ABC_transpr_LolD-like"/>
</dbReference>
<dbReference type="InterPro" id="IPR017911">
    <property type="entry name" value="MacB-like_ATP-bd"/>
</dbReference>
<dbReference type="InterPro" id="IPR027417">
    <property type="entry name" value="P-loop_NTPase"/>
</dbReference>
<dbReference type="PANTHER" id="PTHR24220">
    <property type="entry name" value="IMPORT ATP-BINDING PROTEIN"/>
    <property type="match status" value="1"/>
</dbReference>
<dbReference type="PANTHER" id="PTHR24220:SF689">
    <property type="entry name" value="LIPOPROTEIN-RELEASING SYSTEM ATP-BINDING PROTEIN LOLD"/>
    <property type="match status" value="1"/>
</dbReference>
<dbReference type="Pfam" id="PF00005">
    <property type="entry name" value="ABC_tran"/>
    <property type="match status" value="1"/>
</dbReference>
<dbReference type="SMART" id="SM00382">
    <property type="entry name" value="AAA"/>
    <property type="match status" value="1"/>
</dbReference>
<dbReference type="SUPFAM" id="SSF52540">
    <property type="entry name" value="P-loop containing nucleoside triphosphate hydrolases"/>
    <property type="match status" value="1"/>
</dbReference>
<dbReference type="PROSITE" id="PS00211">
    <property type="entry name" value="ABC_TRANSPORTER_1"/>
    <property type="match status" value="1"/>
</dbReference>
<dbReference type="PROSITE" id="PS50893">
    <property type="entry name" value="ABC_TRANSPORTER_2"/>
    <property type="match status" value="1"/>
</dbReference>
<dbReference type="PROSITE" id="PS51244">
    <property type="entry name" value="LOLD"/>
    <property type="match status" value="1"/>
</dbReference>
<proteinExistence type="inferred from homology"/>
<name>LOLD_RUEPO</name>
<gene>
    <name evidence="1" type="primary">lolD</name>
    <name type="ordered locus">SPO1124</name>
</gene>
<accession>Q5LUD0</accession>
<comment type="function">
    <text evidence="1">Part of the ABC transporter complex LolCDE involved in the translocation of mature outer membrane-directed lipoproteins, from the inner membrane to the periplasmic chaperone, LolA. Responsible for the formation of the LolA-lipoprotein complex in an ATP-dependent manner.</text>
</comment>
<comment type="subunit">
    <text evidence="1">The complex is composed of two ATP-binding proteins (LolD) and two transmembrane proteins (LolC and LolE).</text>
</comment>
<comment type="subcellular location">
    <subcellularLocation>
        <location evidence="1">Cell inner membrane</location>
        <topology evidence="1">Peripheral membrane protein</topology>
    </subcellularLocation>
</comment>
<comment type="similarity">
    <text evidence="1">Belongs to the ABC transporter superfamily. Lipoprotein translocase (TC 3.A.1.125) family.</text>
</comment>
<evidence type="ECO:0000255" key="1">
    <source>
        <dbReference type="HAMAP-Rule" id="MF_01708"/>
    </source>
</evidence>
<sequence length="228" mass="24142">MSEPTLRLSGIEKTYLSGTPGEVRVLRGVDLSVEPGEMVALVAPSGAGKSTLLHISGLLDVPDAGRVEIAGQDMTGRGDRARTGVRRRDVGFVYQFHHLLPEFTALENVVLPQLANGIGEGEARARARALLSRVGVEGRAGHRPAALSGGEQQRVAFCRALANAPRLLLADEPTGNLDPATSDQVFDALVELVRGTGLSALIATHNLELAARMDRVVRLSDGRLSAES</sequence>
<feature type="chain" id="PRO_0000272156" description="Lipoprotein-releasing system ATP-binding protein LolD">
    <location>
        <begin position="1"/>
        <end position="228"/>
    </location>
</feature>
<feature type="domain" description="ABC transporter" evidence="1">
    <location>
        <begin position="6"/>
        <end position="228"/>
    </location>
</feature>
<feature type="binding site" evidence="1">
    <location>
        <begin position="43"/>
        <end position="50"/>
    </location>
    <ligand>
        <name>ATP</name>
        <dbReference type="ChEBI" id="CHEBI:30616"/>
    </ligand>
</feature>
<organism>
    <name type="scientific">Ruegeria pomeroyi (strain ATCC 700808 / DSM 15171 / DSS-3)</name>
    <name type="common">Silicibacter pomeroyi</name>
    <dbReference type="NCBI Taxonomy" id="246200"/>
    <lineage>
        <taxon>Bacteria</taxon>
        <taxon>Pseudomonadati</taxon>
        <taxon>Pseudomonadota</taxon>
        <taxon>Alphaproteobacteria</taxon>
        <taxon>Rhodobacterales</taxon>
        <taxon>Roseobacteraceae</taxon>
        <taxon>Ruegeria</taxon>
    </lineage>
</organism>